<protein>
    <recommendedName>
        <fullName>Dystrophin-related protein 2</fullName>
        <shortName>DRP-2</shortName>
    </recommendedName>
</protein>
<organism>
    <name type="scientific">Mus musculus</name>
    <name type="common">Mouse</name>
    <dbReference type="NCBI Taxonomy" id="10090"/>
    <lineage>
        <taxon>Eukaryota</taxon>
        <taxon>Metazoa</taxon>
        <taxon>Chordata</taxon>
        <taxon>Craniata</taxon>
        <taxon>Vertebrata</taxon>
        <taxon>Euteleostomi</taxon>
        <taxon>Mammalia</taxon>
        <taxon>Eutheria</taxon>
        <taxon>Euarchontoglires</taxon>
        <taxon>Glires</taxon>
        <taxon>Rodentia</taxon>
        <taxon>Myomorpha</taxon>
        <taxon>Muroidea</taxon>
        <taxon>Muridae</taxon>
        <taxon>Murinae</taxon>
        <taxon>Mus</taxon>
        <taxon>Mus</taxon>
    </lineage>
</organism>
<proteinExistence type="evidence at protein level"/>
<evidence type="ECO:0000250" key="1"/>
<evidence type="ECO:0000250" key="2">
    <source>
        <dbReference type="UniProtKB" id="Q9EPA0"/>
    </source>
</evidence>
<evidence type="ECO:0000255" key="3">
    <source>
        <dbReference type="PROSITE-ProRule" id="PRU00224"/>
    </source>
</evidence>
<evidence type="ECO:0000255" key="4">
    <source>
        <dbReference type="PROSITE-ProRule" id="PRU00228"/>
    </source>
</evidence>
<evidence type="ECO:0000256" key="5">
    <source>
        <dbReference type="SAM" id="MobiDB-lite"/>
    </source>
</evidence>
<evidence type="ECO:0000269" key="6">
    <source>
    </source>
</evidence>
<evidence type="ECO:0000269" key="7">
    <source>
    </source>
</evidence>
<evidence type="ECO:0000269" key="8">
    <source>
    </source>
</evidence>
<evidence type="ECO:0000269" key="9">
    <source>
    </source>
</evidence>
<evidence type="ECO:0000305" key="10"/>
<dbReference type="EMBL" id="AK081426">
    <property type="protein sequence ID" value="BAC38217.1"/>
    <property type="molecule type" value="mRNA"/>
</dbReference>
<dbReference type="EMBL" id="AL672064">
    <property type="status" value="NOT_ANNOTATED_CDS"/>
    <property type="molecule type" value="Genomic_DNA"/>
</dbReference>
<dbReference type="EMBL" id="BC125345">
    <property type="protein sequence ID" value="AAI25346.1"/>
    <property type="molecule type" value="mRNA"/>
</dbReference>
<dbReference type="EMBL" id="BC125347">
    <property type="protein sequence ID" value="AAI25348.1"/>
    <property type="molecule type" value="mRNA"/>
</dbReference>
<dbReference type="EMBL" id="U43520">
    <property type="protein sequence ID" value="AAC52607.1"/>
    <property type="molecule type" value="mRNA"/>
</dbReference>
<dbReference type="CCDS" id="CCDS30394.1"/>
<dbReference type="RefSeq" id="NP_001398798.1">
    <property type="nucleotide sequence ID" value="NM_001411869.1"/>
</dbReference>
<dbReference type="RefSeq" id="NP_001398799.1">
    <property type="nucleotide sequence ID" value="NM_001411870.1"/>
</dbReference>
<dbReference type="RefSeq" id="NP_001398801.1">
    <property type="nucleotide sequence ID" value="NM_001411872.1"/>
</dbReference>
<dbReference type="RefSeq" id="NP_034208.2">
    <property type="nucleotide sequence ID" value="NM_010078.4"/>
</dbReference>
<dbReference type="RefSeq" id="XP_036017700.1">
    <property type="nucleotide sequence ID" value="XM_036161807.1"/>
</dbReference>
<dbReference type="SMR" id="Q05AA6"/>
<dbReference type="BioGRID" id="199313">
    <property type="interactions" value="5"/>
</dbReference>
<dbReference type="CORUM" id="Q05AA6"/>
<dbReference type="FunCoup" id="Q05AA6">
    <property type="interactions" value="87"/>
</dbReference>
<dbReference type="STRING" id="10090.ENSMUSP00000115246"/>
<dbReference type="GlyGen" id="Q05AA6">
    <property type="glycosylation" value="1 site"/>
</dbReference>
<dbReference type="iPTMnet" id="Q05AA6"/>
<dbReference type="PhosphoSitePlus" id="Q05AA6"/>
<dbReference type="PaxDb" id="10090-ENSMUSP00000115246"/>
<dbReference type="ProteomicsDB" id="277499"/>
<dbReference type="Antibodypedia" id="506">
    <property type="antibodies" value="64 antibodies from 18 providers"/>
</dbReference>
<dbReference type="DNASU" id="13497"/>
<dbReference type="Ensembl" id="ENSMUST00000113226.2">
    <property type="protein sequence ID" value="ENSMUSP00000108852.2"/>
    <property type="gene ID" value="ENSMUSG00000000223.14"/>
</dbReference>
<dbReference type="Ensembl" id="ENSMUST00000113228.8">
    <property type="protein sequence ID" value="ENSMUSP00000108854.2"/>
    <property type="gene ID" value="ENSMUSG00000000223.14"/>
</dbReference>
<dbReference type="Ensembl" id="ENSMUST00000153424.8">
    <property type="protein sequence ID" value="ENSMUSP00000115246.2"/>
    <property type="gene ID" value="ENSMUSG00000000223.14"/>
</dbReference>
<dbReference type="GeneID" id="13497"/>
<dbReference type="KEGG" id="mmu:13497"/>
<dbReference type="UCSC" id="uc009uga.2">
    <property type="organism name" value="mouse"/>
</dbReference>
<dbReference type="AGR" id="MGI:107432"/>
<dbReference type="CTD" id="1821"/>
<dbReference type="MGI" id="MGI:107432">
    <property type="gene designation" value="Drp2"/>
</dbReference>
<dbReference type="VEuPathDB" id="HostDB:ENSMUSG00000000223"/>
<dbReference type="eggNOG" id="KOG4286">
    <property type="taxonomic scope" value="Eukaryota"/>
</dbReference>
<dbReference type="GeneTree" id="ENSGT00940000153467"/>
<dbReference type="HOGENOM" id="CLU_001187_0_0_1"/>
<dbReference type="InParanoid" id="Q05AA6"/>
<dbReference type="OMA" id="WRAADHF"/>
<dbReference type="TreeFam" id="TF337303"/>
<dbReference type="Reactome" id="R-MMU-9913351">
    <property type="pathway name" value="Formation of the dystrophin-glycoprotein complex (DGC)"/>
</dbReference>
<dbReference type="BioGRID-ORCS" id="13497">
    <property type="hits" value="2 hits in 78 CRISPR screens"/>
</dbReference>
<dbReference type="ChiTaRS" id="Drp2">
    <property type="organism name" value="mouse"/>
</dbReference>
<dbReference type="PRO" id="PR:Q05AA6"/>
<dbReference type="Proteomes" id="UP000000589">
    <property type="component" value="Chromosome X"/>
</dbReference>
<dbReference type="RNAct" id="Q05AA6">
    <property type="molecule type" value="protein"/>
</dbReference>
<dbReference type="Bgee" id="ENSMUSG00000000223">
    <property type="expression patterns" value="Expressed in sciatic nerve and 162 other cell types or tissues"/>
</dbReference>
<dbReference type="ExpressionAtlas" id="Q05AA6">
    <property type="expression patterns" value="baseline and differential"/>
</dbReference>
<dbReference type="GO" id="GO:0005829">
    <property type="term" value="C:cytosol"/>
    <property type="evidence" value="ECO:0000304"/>
    <property type="project" value="Reactome"/>
</dbReference>
<dbReference type="GO" id="GO:0030425">
    <property type="term" value="C:dendrite"/>
    <property type="evidence" value="ECO:0007669"/>
    <property type="project" value="UniProtKB-SubCell"/>
</dbReference>
<dbReference type="GO" id="GO:0098978">
    <property type="term" value="C:glutamatergic synapse"/>
    <property type="evidence" value="ECO:0007669"/>
    <property type="project" value="Ensembl"/>
</dbReference>
<dbReference type="GO" id="GO:0043204">
    <property type="term" value="C:perikaryon"/>
    <property type="evidence" value="ECO:0007669"/>
    <property type="project" value="UniProtKB-SubCell"/>
</dbReference>
<dbReference type="GO" id="GO:0005886">
    <property type="term" value="C:plasma membrane"/>
    <property type="evidence" value="ECO:0000314"/>
    <property type="project" value="MGI"/>
</dbReference>
<dbReference type="GO" id="GO:0014069">
    <property type="term" value="C:postsynaptic density"/>
    <property type="evidence" value="ECO:0007669"/>
    <property type="project" value="UniProtKB-SubCell"/>
</dbReference>
<dbReference type="GO" id="GO:0008270">
    <property type="term" value="F:zinc ion binding"/>
    <property type="evidence" value="ECO:0007669"/>
    <property type="project" value="UniProtKB-KW"/>
</dbReference>
<dbReference type="GO" id="GO:0007417">
    <property type="term" value="P:central nervous system development"/>
    <property type="evidence" value="ECO:0007669"/>
    <property type="project" value="InterPro"/>
</dbReference>
<dbReference type="GO" id="GO:0050808">
    <property type="term" value="P:synapse organization"/>
    <property type="evidence" value="ECO:0007669"/>
    <property type="project" value="Ensembl"/>
</dbReference>
<dbReference type="CDD" id="cd16248">
    <property type="entry name" value="EFh_DRP-2"/>
    <property type="match status" value="1"/>
</dbReference>
<dbReference type="CDD" id="cd00176">
    <property type="entry name" value="SPEC"/>
    <property type="match status" value="1"/>
</dbReference>
<dbReference type="CDD" id="cd00201">
    <property type="entry name" value="WW"/>
    <property type="match status" value="1"/>
</dbReference>
<dbReference type="CDD" id="cd02334">
    <property type="entry name" value="ZZ_dystrophin"/>
    <property type="match status" value="1"/>
</dbReference>
<dbReference type="FunFam" id="1.10.238.10:FF:000008">
    <property type="entry name" value="Dystrophin isoform 2"/>
    <property type="match status" value="1"/>
</dbReference>
<dbReference type="FunFam" id="3.30.60.90:FF:000001">
    <property type="entry name" value="Dystrophin isoform 2"/>
    <property type="match status" value="1"/>
</dbReference>
<dbReference type="FunFam" id="1.10.238.10:FF:000023">
    <property type="entry name" value="dystrophin isoform X1"/>
    <property type="match status" value="1"/>
</dbReference>
<dbReference type="FunFam" id="2.20.70.10:FF:000004">
    <property type="entry name" value="dystrophin isoform X1"/>
    <property type="match status" value="1"/>
</dbReference>
<dbReference type="FunFam" id="1.20.58.60:FF:000029">
    <property type="entry name" value="utrophin isoform X1"/>
    <property type="match status" value="1"/>
</dbReference>
<dbReference type="FunFam" id="1.20.58.60:FF:000056">
    <property type="entry name" value="utrophin isoform X1"/>
    <property type="match status" value="1"/>
</dbReference>
<dbReference type="Gene3D" id="1.20.58.60">
    <property type="match status" value="2"/>
</dbReference>
<dbReference type="Gene3D" id="2.20.70.10">
    <property type="match status" value="1"/>
</dbReference>
<dbReference type="Gene3D" id="3.30.60.90">
    <property type="match status" value="1"/>
</dbReference>
<dbReference type="Gene3D" id="1.10.238.10">
    <property type="entry name" value="EF-hand"/>
    <property type="match status" value="2"/>
</dbReference>
<dbReference type="InterPro" id="IPR017433">
    <property type="entry name" value="Dystrophin-related_2"/>
</dbReference>
<dbReference type="InterPro" id="IPR011992">
    <property type="entry name" value="EF-hand-dom_pair"/>
</dbReference>
<dbReference type="InterPro" id="IPR015153">
    <property type="entry name" value="EF-hand_dom_typ1"/>
</dbReference>
<dbReference type="InterPro" id="IPR015154">
    <property type="entry name" value="EF-hand_dom_typ2"/>
</dbReference>
<dbReference type="InterPro" id="IPR050774">
    <property type="entry name" value="KCMF1/Dystrophin"/>
</dbReference>
<dbReference type="InterPro" id="IPR018159">
    <property type="entry name" value="Spectrin/alpha-actinin"/>
</dbReference>
<dbReference type="InterPro" id="IPR002017">
    <property type="entry name" value="Spectrin_repeat"/>
</dbReference>
<dbReference type="InterPro" id="IPR001202">
    <property type="entry name" value="WW_dom"/>
</dbReference>
<dbReference type="InterPro" id="IPR036020">
    <property type="entry name" value="WW_dom_sf"/>
</dbReference>
<dbReference type="InterPro" id="IPR000433">
    <property type="entry name" value="Znf_ZZ"/>
</dbReference>
<dbReference type="InterPro" id="IPR043145">
    <property type="entry name" value="Znf_ZZ_sf"/>
</dbReference>
<dbReference type="PANTHER" id="PTHR12268:SF16">
    <property type="entry name" value="DYSTROPHIN-RELATED PROTEIN 2"/>
    <property type="match status" value="1"/>
</dbReference>
<dbReference type="PANTHER" id="PTHR12268">
    <property type="entry name" value="E3 UBIQUITIN-PROTEIN LIGASE KCMF1"/>
    <property type="match status" value="1"/>
</dbReference>
<dbReference type="Pfam" id="PF09068">
    <property type="entry name" value="EF-hand_2"/>
    <property type="match status" value="1"/>
</dbReference>
<dbReference type="Pfam" id="PF09069">
    <property type="entry name" value="EF-hand_3"/>
    <property type="match status" value="1"/>
</dbReference>
<dbReference type="Pfam" id="PF00435">
    <property type="entry name" value="Spectrin"/>
    <property type="match status" value="2"/>
</dbReference>
<dbReference type="Pfam" id="PF00397">
    <property type="entry name" value="WW"/>
    <property type="match status" value="1"/>
</dbReference>
<dbReference type="Pfam" id="PF00569">
    <property type="entry name" value="ZZ"/>
    <property type="match status" value="1"/>
</dbReference>
<dbReference type="PIRSF" id="PIRSF038205">
    <property type="entry name" value="Dystrophin-related_p2"/>
    <property type="match status" value="1"/>
</dbReference>
<dbReference type="SMART" id="SM00150">
    <property type="entry name" value="SPEC"/>
    <property type="match status" value="2"/>
</dbReference>
<dbReference type="SMART" id="SM00456">
    <property type="entry name" value="WW"/>
    <property type="match status" value="1"/>
</dbReference>
<dbReference type="SMART" id="SM00291">
    <property type="entry name" value="ZnF_ZZ"/>
    <property type="match status" value="1"/>
</dbReference>
<dbReference type="SUPFAM" id="SSF47473">
    <property type="entry name" value="EF-hand"/>
    <property type="match status" value="2"/>
</dbReference>
<dbReference type="SUPFAM" id="SSF57850">
    <property type="entry name" value="RING/U-box"/>
    <property type="match status" value="1"/>
</dbReference>
<dbReference type="SUPFAM" id="SSF46966">
    <property type="entry name" value="Spectrin repeat"/>
    <property type="match status" value="2"/>
</dbReference>
<dbReference type="SUPFAM" id="SSF51045">
    <property type="entry name" value="WW domain"/>
    <property type="match status" value="1"/>
</dbReference>
<dbReference type="PROSITE" id="PS01159">
    <property type="entry name" value="WW_DOMAIN_1"/>
    <property type="match status" value="1"/>
</dbReference>
<dbReference type="PROSITE" id="PS50020">
    <property type="entry name" value="WW_DOMAIN_2"/>
    <property type="match status" value="1"/>
</dbReference>
<dbReference type="PROSITE" id="PS01357">
    <property type="entry name" value="ZF_ZZ_1"/>
    <property type="match status" value="1"/>
</dbReference>
<dbReference type="PROSITE" id="PS50135">
    <property type="entry name" value="ZF_ZZ_2"/>
    <property type="match status" value="1"/>
</dbReference>
<accession>Q05AA6</accession>
<accession>Q61095</accession>
<accession>Q8C4R1</accession>
<comment type="function">
    <text evidence="1 7">Required for normal myelination and for normal organization of the cytoplasm and the formation of Cajal bands in myelinating Schwann cells (PubMed:22764250). Required for normal PRX location at appositions between the abaxonal surface of the myelin sheath and the Schwann cell plasma membrane (PubMed:22764250). Possibly involved in membrane-cytoskeleton interactions of the central nervous system.</text>
</comment>
<comment type="subunit">
    <text evidence="6 7">Interacts with PRX; this enhances phosphorylation (PubMed:22764250). Identified in a dystroglycan complex that contains at least PRX, DRP2, UTRN, DMD and DAG1 (PubMed:11430802).</text>
</comment>
<comment type="subcellular location">
    <subcellularLocation>
        <location evidence="2">Postsynaptic density</location>
    </subcellularLocation>
    <subcellularLocation>
        <location evidence="2">Cell projection</location>
        <location evidence="2">Dendrite</location>
    </subcellularLocation>
    <subcellularLocation>
        <location evidence="2">Perikaryon</location>
    </subcellularLocation>
    <subcellularLocation>
        <location evidence="6 7 8">Cell membrane</location>
        <topology evidence="7">Peripheral membrane protein</topology>
    </subcellularLocation>
    <text evidence="7">Detected in Schwann cells at periaxonal myelin membranes.</text>
</comment>
<comment type="tissue specificity">
    <text evidence="6 7 9">Detected in quadriceps nerve Schwann cells (PubMed:22764250). Detected in sciatic nerve (PubMed:11430802, PubMed:22764250). Detected in trigeminal nerve Schwann cells (at protein level) (PubMed:11430802). Detected in brain and spinal cord (PubMed:8640231).</text>
</comment>
<comment type="disruption phenotype">
    <text evidence="7">Mice with a Schwann cell-specific gene disruption show no obvious impairment of nerve conduction velocity and display no visible defects of their motor skills. After six months, about 6% of their nerve fibers present myelination defects, including myelin outfoldings, focal hypermyelination, and onion bulbs with thin myelin and supernumerary Schwann cells. At the molecular level, Schwann cell-specific gene disruption impairs formation of Cajal bands and location of Prx in patches that colocalize with appositions between the abaxonal surface of the myelin sheath and the Schwann cell plasma membrane. Cytoplasm from mutant Schwann cells forms an annulus under the cell membrane, insted of being strictly compartmentalized. Besides, mutant nerves display increased numbers of Schmidt-Lanterman incisures.</text>
</comment>
<name>DRP2_MOUSE</name>
<feature type="chain" id="PRO_0000345015" description="Dystrophin-related protein 2">
    <location>
        <begin position="1"/>
        <end position="957"/>
    </location>
</feature>
<feature type="repeat" description="Spectrin 1">
    <location>
        <begin position="102"/>
        <end position="179"/>
    </location>
</feature>
<feature type="repeat" description="Spectrin 2">
    <location>
        <begin position="231"/>
        <end position="337"/>
    </location>
</feature>
<feature type="domain" description="WW" evidence="3">
    <location>
        <begin position="358"/>
        <end position="383"/>
    </location>
</feature>
<feature type="zinc finger region" description="ZZ-type; degenerate" evidence="4">
    <location>
        <begin position="605"/>
        <end position="661"/>
    </location>
</feature>
<feature type="region of interest" description="Disordered" evidence="5">
    <location>
        <begin position="876"/>
        <end position="923"/>
    </location>
</feature>
<feature type="compositionally biased region" description="Low complexity" evidence="5">
    <location>
        <begin position="876"/>
        <end position="894"/>
    </location>
</feature>
<feature type="binding site" evidence="4">
    <location>
        <position position="610"/>
    </location>
    <ligand>
        <name>Zn(2+)</name>
        <dbReference type="ChEBI" id="CHEBI:29105"/>
    </ligand>
</feature>
<feature type="binding site" evidence="4">
    <location>
        <position position="613"/>
    </location>
    <ligand>
        <name>Zn(2+)</name>
        <dbReference type="ChEBI" id="CHEBI:29105"/>
    </ligand>
</feature>
<feature type="binding site" evidence="4">
    <location>
        <position position="634"/>
    </location>
    <ligand>
        <name>Zn(2+)</name>
        <dbReference type="ChEBI" id="CHEBI:29105"/>
    </ligand>
</feature>
<feature type="binding site" evidence="4">
    <location>
        <position position="637"/>
    </location>
    <ligand>
        <name>Zn(2+)</name>
        <dbReference type="ChEBI" id="CHEBI:29105"/>
    </ligand>
</feature>
<feature type="modified residue" description="Phosphoserine" evidence="7">
    <location>
        <position position="748"/>
    </location>
</feature>
<feature type="modified residue" description="Phosphothreonine" evidence="7">
    <location>
        <position position="910"/>
    </location>
</feature>
<feature type="sequence conflict" description="In Ref. 1; BAC38217." evidence="10" ref="1">
    <original>I</original>
    <variation>F</variation>
    <location>
        <position position="362"/>
    </location>
</feature>
<feature type="sequence conflict" description="In Ref. 4; AAC52607." evidence="10" ref="4">
    <original>V</original>
    <variation>VLHRV</variation>
    <location>
        <position position="598"/>
    </location>
</feature>
<gene>
    <name type="primary">Drp2</name>
</gene>
<keyword id="KW-1003">Cell membrane</keyword>
<keyword id="KW-0966">Cell projection</keyword>
<keyword id="KW-0472">Membrane</keyword>
<keyword id="KW-0479">Metal-binding</keyword>
<keyword id="KW-0597">Phosphoprotein</keyword>
<keyword id="KW-1185">Reference proteome</keyword>
<keyword id="KW-0677">Repeat</keyword>
<keyword id="KW-0770">Synapse</keyword>
<keyword id="KW-0862">Zinc</keyword>
<keyword id="KW-0863">Zinc-finger</keyword>
<sequence>MQPLVMQGCPYTLPRCHEWHAADRFHHSSSLRNTCPQPQVRAAVTIPAPPWDGAGDPCLSPKLLNGTVGATGPLEPSAMNLCWNEIKKKSHNLRARLEAFSDLSGKLQLPLREIIDWLSQKDEELSAQLPLQGDVALVQQEKETHAAFMEEVKSKGPYISSVLESAQAFLSQHPFEELEESQSESKDTSPRQRIQNLSRFVWKQATVASELWEKLTARCVDQHRHIEHTLEHLLEIQGAMEELSSTLTQAEGVRATWEPIGDLFIDSLPEHIQAIKLFKEEFSPVKDGVKLVNDLAHQLAISDVHLSMENSRALEQINIRWKQLQVSVAERLKQLQDAHRDFGPGSQHFLSTSVQVPWERAISPNKVPYYINHQAQTTCWDHPKMTELYQTLADLNNIKFSAYRTAMKLRRVQKALRLDLVTLTTALEIFNEHDLQASEHVMDVVEVIHCLTALYERLEEERGILVNVPLCVDMSLNWLLNVFDSGRSGKMRALSFKTGIACLCGTEVKEKLQYLFSQVANSGSQCDQRHLGALLHEAIQVPRQLGEVAAFGGSNVEPSVRSCFRFSTGKPVIEASQFLEWVNLEPQSMVWLAVLHRVTIAEQVKHQTKCSICRQCPIKGFRYRSLKQFNVDICQTCFLTGRASKGNKLHYPIMEYYTPTTSSENMRDFATTLKNKFRSKQYFSKHPQRGYLPVQSVLESDCSETPASSPMLPHADTHSRIEHFASRLAEMESQNCSFFNDSLSPDDSIDEDQYLLRHSSPITDREPAFGQQAPCSMATESKGELEKILAHLEDENRILQGELRRLKWQHEEAAEAPTLVEGSAEATPDHRNEELLAEARILRQHKSRLETRMQILEDHNKQLESQLQRLRELLLQPPSESDGNGSAGSSLASSPRQSEGSHPREKGQTTPDTEVADDVGSKSQDVSLCLEDIMEKLRHAFPSVRSSDVTANTLLAS</sequence>
<reference key="1">
    <citation type="journal article" date="2005" name="Science">
        <title>The transcriptional landscape of the mammalian genome.</title>
        <authorList>
            <person name="Carninci P."/>
            <person name="Kasukawa T."/>
            <person name="Katayama S."/>
            <person name="Gough J."/>
            <person name="Frith M.C."/>
            <person name="Maeda N."/>
            <person name="Oyama R."/>
            <person name="Ravasi T."/>
            <person name="Lenhard B."/>
            <person name="Wells C."/>
            <person name="Kodzius R."/>
            <person name="Shimokawa K."/>
            <person name="Bajic V.B."/>
            <person name="Brenner S.E."/>
            <person name="Batalov S."/>
            <person name="Forrest A.R."/>
            <person name="Zavolan M."/>
            <person name="Davis M.J."/>
            <person name="Wilming L.G."/>
            <person name="Aidinis V."/>
            <person name="Allen J.E."/>
            <person name="Ambesi-Impiombato A."/>
            <person name="Apweiler R."/>
            <person name="Aturaliya R.N."/>
            <person name="Bailey T.L."/>
            <person name="Bansal M."/>
            <person name="Baxter L."/>
            <person name="Beisel K.W."/>
            <person name="Bersano T."/>
            <person name="Bono H."/>
            <person name="Chalk A.M."/>
            <person name="Chiu K.P."/>
            <person name="Choudhary V."/>
            <person name="Christoffels A."/>
            <person name="Clutterbuck D.R."/>
            <person name="Crowe M.L."/>
            <person name="Dalla E."/>
            <person name="Dalrymple B.P."/>
            <person name="de Bono B."/>
            <person name="Della Gatta G."/>
            <person name="di Bernardo D."/>
            <person name="Down T."/>
            <person name="Engstrom P."/>
            <person name="Fagiolini M."/>
            <person name="Faulkner G."/>
            <person name="Fletcher C.F."/>
            <person name="Fukushima T."/>
            <person name="Furuno M."/>
            <person name="Futaki S."/>
            <person name="Gariboldi M."/>
            <person name="Georgii-Hemming P."/>
            <person name="Gingeras T.R."/>
            <person name="Gojobori T."/>
            <person name="Green R.E."/>
            <person name="Gustincich S."/>
            <person name="Harbers M."/>
            <person name="Hayashi Y."/>
            <person name="Hensch T.K."/>
            <person name="Hirokawa N."/>
            <person name="Hill D."/>
            <person name="Huminiecki L."/>
            <person name="Iacono M."/>
            <person name="Ikeo K."/>
            <person name="Iwama A."/>
            <person name="Ishikawa T."/>
            <person name="Jakt M."/>
            <person name="Kanapin A."/>
            <person name="Katoh M."/>
            <person name="Kawasawa Y."/>
            <person name="Kelso J."/>
            <person name="Kitamura H."/>
            <person name="Kitano H."/>
            <person name="Kollias G."/>
            <person name="Krishnan S.P."/>
            <person name="Kruger A."/>
            <person name="Kummerfeld S.K."/>
            <person name="Kurochkin I.V."/>
            <person name="Lareau L.F."/>
            <person name="Lazarevic D."/>
            <person name="Lipovich L."/>
            <person name="Liu J."/>
            <person name="Liuni S."/>
            <person name="McWilliam S."/>
            <person name="Madan Babu M."/>
            <person name="Madera M."/>
            <person name="Marchionni L."/>
            <person name="Matsuda H."/>
            <person name="Matsuzawa S."/>
            <person name="Miki H."/>
            <person name="Mignone F."/>
            <person name="Miyake S."/>
            <person name="Morris K."/>
            <person name="Mottagui-Tabar S."/>
            <person name="Mulder N."/>
            <person name="Nakano N."/>
            <person name="Nakauchi H."/>
            <person name="Ng P."/>
            <person name="Nilsson R."/>
            <person name="Nishiguchi S."/>
            <person name="Nishikawa S."/>
            <person name="Nori F."/>
            <person name="Ohara O."/>
            <person name="Okazaki Y."/>
            <person name="Orlando V."/>
            <person name="Pang K.C."/>
            <person name="Pavan W.J."/>
            <person name="Pavesi G."/>
            <person name="Pesole G."/>
            <person name="Petrovsky N."/>
            <person name="Piazza S."/>
            <person name="Reed J."/>
            <person name="Reid J.F."/>
            <person name="Ring B.Z."/>
            <person name="Ringwald M."/>
            <person name="Rost B."/>
            <person name="Ruan Y."/>
            <person name="Salzberg S.L."/>
            <person name="Sandelin A."/>
            <person name="Schneider C."/>
            <person name="Schoenbach C."/>
            <person name="Sekiguchi K."/>
            <person name="Semple C.A."/>
            <person name="Seno S."/>
            <person name="Sessa L."/>
            <person name="Sheng Y."/>
            <person name="Shibata Y."/>
            <person name="Shimada H."/>
            <person name="Shimada K."/>
            <person name="Silva D."/>
            <person name="Sinclair B."/>
            <person name="Sperling S."/>
            <person name="Stupka E."/>
            <person name="Sugiura K."/>
            <person name="Sultana R."/>
            <person name="Takenaka Y."/>
            <person name="Taki K."/>
            <person name="Tammoja K."/>
            <person name="Tan S.L."/>
            <person name="Tang S."/>
            <person name="Taylor M.S."/>
            <person name="Tegner J."/>
            <person name="Teichmann S.A."/>
            <person name="Ueda H.R."/>
            <person name="van Nimwegen E."/>
            <person name="Verardo R."/>
            <person name="Wei C.L."/>
            <person name="Yagi K."/>
            <person name="Yamanishi H."/>
            <person name="Zabarovsky E."/>
            <person name="Zhu S."/>
            <person name="Zimmer A."/>
            <person name="Hide W."/>
            <person name="Bult C."/>
            <person name="Grimmond S.M."/>
            <person name="Teasdale R.D."/>
            <person name="Liu E.T."/>
            <person name="Brusic V."/>
            <person name="Quackenbush J."/>
            <person name="Wahlestedt C."/>
            <person name="Mattick J.S."/>
            <person name="Hume D.A."/>
            <person name="Kai C."/>
            <person name="Sasaki D."/>
            <person name="Tomaru Y."/>
            <person name="Fukuda S."/>
            <person name="Kanamori-Katayama M."/>
            <person name="Suzuki M."/>
            <person name="Aoki J."/>
            <person name="Arakawa T."/>
            <person name="Iida J."/>
            <person name="Imamura K."/>
            <person name="Itoh M."/>
            <person name="Kato T."/>
            <person name="Kawaji H."/>
            <person name="Kawagashira N."/>
            <person name="Kawashima T."/>
            <person name="Kojima M."/>
            <person name="Kondo S."/>
            <person name="Konno H."/>
            <person name="Nakano K."/>
            <person name="Ninomiya N."/>
            <person name="Nishio T."/>
            <person name="Okada M."/>
            <person name="Plessy C."/>
            <person name="Shibata K."/>
            <person name="Shiraki T."/>
            <person name="Suzuki S."/>
            <person name="Tagami M."/>
            <person name="Waki K."/>
            <person name="Watahiki A."/>
            <person name="Okamura-Oho Y."/>
            <person name="Suzuki H."/>
            <person name="Kawai J."/>
            <person name="Hayashizaki Y."/>
        </authorList>
    </citation>
    <scope>NUCLEOTIDE SEQUENCE [LARGE SCALE MRNA]</scope>
    <source>
        <strain>C57BL/6J</strain>
        <tissue>Head</tissue>
    </source>
</reference>
<reference key="2">
    <citation type="journal article" date="2009" name="PLoS Biol.">
        <title>Lineage-specific biology revealed by a finished genome assembly of the mouse.</title>
        <authorList>
            <person name="Church D.M."/>
            <person name="Goodstadt L."/>
            <person name="Hillier L.W."/>
            <person name="Zody M.C."/>
            <person name="Goldstein S."/>
            <person name="She X."/>
            <person name="Bult C.J."/>
            <person name="Agarwala R."/>
            <person name="Cherry J.L."/>
            <person name="DiCuccio M."/>
            <person name="Hlavina W."/>
            <person name="Kapustin Y."/>
            <person name="Meric P."/>
            <person name="Maglott D."/>
            <person name="Birtle Z."/>
            <person name="Marques A.C."/>
            <person name="Graves T."/>
            <person name="Zhou S."/>
            <person name="Teague B."/>
            <person name="Potamousis K."/>
            <person name="Churas C."/>
            <person name="Place M."/>
            <person name="Herschleb J."/>
            <person name="Runnheim R."/>
            <person name="Forrest D."/>
            <person name="Amos-Landgraf J."/>
            <person name="Schwartz D.C."/>
            <person name="Cheng Z."/>
            <person name="Lindblad-Toh K."/>
            <person name="Eichler E.E."/>
            <person name="Ponting C.P."/>
        </authorList>
    </citation>
    <scope>NUCLEOTIDE SEQUENCE [LARGE SCALE GENOMIC DNA]</scope>
    <source>
        <strain>C57BL/6J</strain>
    </source>
</reference>
<reference key="3">
    <citation type="journal article" date="2004" name="Genome Res.">
        <title>The status, quality, and expansion of the NIH full-length cDNA project: the Mammalian Gene Collection (MGC).</title>
        <authorList>
            <consortium name="The MGC Project Team"/>
        </authorList>
    </citation>
    <scope>NUCLEOTIDE SEQUENCE [LARGE SCALE MRNA]</scope>
    <source>
        <tissue>Brain</tissue>
    </source>
</reference>
<reference key="4">
    <citation type="journal article" date="1996" name="Nat. Genet.">
        <title>Characterization of DRP2, a novel human dystrophin homologue.</title>
        <authorList>
            <person name="Roberts R.G."/>
            <person name="Freeman T.C."/>
            <person name="Kendall E."/>
            <person name="Vetrie D.L.P."/>
            <person name="Dixon A.K."/>
            <person name="Shaw-Smith C."/>
            <person name="Bone Q."/>
            <person name="Bobrow M."/>
        </authorList>
    </citation>
    <scope>NUCLEOTIDE SEQUENCE [MRNA] OF 391-862</scope>
    <scope>TISSUE SPECIFICITY</scope>
</reference>
<reference key="5">
    <citation type="journal article" date="2001" name="Neuron">
        <title>Specific disruption of a Schwann cell dystrophin-related protein complex in a demyelinating neuropathy.</title>
        <authorList>
            <person name="Sherman D.L."/>
            <person name="Fabrizi C."/>
            <person name="Gillespie C.S."/>
            <person name="Brophy P.J."/>
        </authorList>
    </citation>
    <scope>SUBCELLULAR LOCATION</scope>
    <scope>TISSUE SPECIFICITY</scope>
    <scope>IDENTIFICATION IN A COMPLEX WITH PRX; UTRN; DMD AND DAG1</scope>
</reference>
<reference key="6">
    <citation type="journal article" date="2010" name="Cell">
        <title>A tissue-specific atlas of mouse protein phosphorylation and expression.</title>
        <authorList>
            <person name="Huttlin E.L."/>
            <person name="Jedrychowski M.P."/>
            <person name="Elias J.E."/>
            <person name="Goswami T."/>
            <person name="Rad R."/>
            <person name="Beausoleil S.A."/>
            <person name="Villen J."/>
            <person name="Haas W."/>
            <person name="Sowa M.E."/>
            <person name="Gygi S.P."/>
        </authorList>
    </citation>
    <scope>IDENTIFICATION BY MASS SPECTROMETRY [LARGE SCALE ANALYSIS]</scope>
    <source>
        <tissue>Brain</tissue>
    </source>
</reference>
<reference key="7">
    <citation type="journal article" date="2012" name="J. Neurosci.">
        <title>Drp2 and periaxin form Cajal bands with dystroglycan but have distinct roles in Schwann cell growth.</title>
        <authorList>
            <person name="Sherman D.L."/>
            <person name="Wu L.M."/>
            <person name="Grove M."/>
            <person name="Gillespie C.S."/>
            <person name="Brophy P.J."/>
        </authorList>
    </citation>
    <scope>INTERACTION WITH PRX</scope>
    <scope>IDENTIFICATION BY MASS SPECTROMETRY</scope>
    <scope>PHOSPHORYLATION AT SER-748 AND THR-910</scope>
    <scope>DISRUPTION PHENOTYPE</scope>
    <scope>FUNCTION</scope>
    <scope>SUBCELLULAR LOCATION</scope>
    <scope>TISSUE SPECIFICITY</scope>
</reference>
<reference key="8">
    <citation type="journal article" date="2012" name="PLoS ONE">
        <title>The light chains of microtubule-associated proteins MAP1A and MAP1B interact with alpha1-syntrophin in the central and peripheral nervous system.</title>
        <authorList>
            <person name="Fuhrmann-Stroissnigg H."/>
            <person name="Noiges R."/>
            <person name="Descovich L."/>
            <person name="Fischer I."/>
            <person name="Albrecht D.E."/>
            <person name="Nothias F."/>
            <person name="Froehner S.C."/>
            <person name="Propst F."/>
        </authorList>
    </citation>
    <scope>SUBCELLULAR LOCATION</scope>
</reference>